<sequence length="103" mass="11435">MSYADSSRNAVLTNGGRTLRAECRNADGNWVTSELDLDTCIGNPNGFLGWGMQNFSHSSEDIKLEEGGRKLTCRPKTVDGGFRERQGIDLNRIQNVNGRLVFQ</sequence>
<dbReference type="EMBL" id="AY763505">
    <property type="protein sequence ID" value="AAV85993.1"/>
    <property type="molecule type" value="mRNA"/>
</dbReference>
<dbReference type="PDB" id="2JZK">
    <property type="method" value="NMR"/>
    <property type="chains" value="A=1-103"/>
</dbReference>
<dbReference type="PDB" id="2KJL">
    <property type="method" value="NMR"/>
    <property type="chains" value="A=1-39, A=90-103"/>
</dbReference>
<dbReference type="PDB" id="3HNU">
    <property type="method" value="X-ray"/>
    <property type="resolution" value="1.56 A"/>
    <property type="chains" value="X=1-39, X=90-103"/>
</dbReference>
<dbReference type="PDB" id="3HNX">
    <property type="method" value="X-ray"/>
    <property type="resolution" value="1.37 A"/>
    <property type="chains" value="A=1-39, A=90-103"/>
</dbReference>
<dbReference type="PDB" id="3HP8">
    <property type="method" value="X-ray"/>
    <property type="resolution" value="2.00 A"/>
    <property type="chains" value="A/B=1-39, A/B=90-103"/>
</dbReference>
<dbReference type="PDBsum" id="2JZK"/>
<dbReference type="PDBsum" id="2KJL"/>
<dbReference type="PDBsum" id="3HNU"/>
<dbReference type="PDBsum" id="3HNX"/>
<dbReference type="PDBsum" id="3HP8"/>
<dbReference type="SMR" id="Q5MK11"/>
<dbReference type="UniLectin" id="Q5MK11"/>
<dbReference type="EvolutionaryTrace" id="Q5MK11"/>
<dbReference type="GO" id="GO:0030246">
    <property type="term" value="F:carbohydrate binding"/>
    <property type="evidence" value="ECO:0007669"/>
    <property type="project" value="UniProtKB-KW"/>
</dbReference>
<dbReference type="Gene3D" id="2.30.60.10">
    <property type="entry name" value="Cyanovirin-N"/>
    <property type="match status" value="1"/>
</dbReference>
<dbReference type="InterPro" id="IPR011058">
    <property type="entry name" value="Cyanovirin-N"/>
</dbReference>
<dbReference type="InterPro" id="IPR036673">
    <property type="entry name" value="Cyanovirin-N_sf"/>
</dbReference>
<dbReference type="PANTHER" id="PTHR42076:SF1">
    <property type="entry name" value="CYANOVIRIN-N DOMAIN-CONTAINING PROTEIN"/>
    <property type="match status" value="1"/>
</dbReference>
<dbReference type="PANTHER" id="PTHR42076">
    <property type="entry name" value="CYANOVIRIN-N HOMOLOG"/>
    <property type="match status" value="1"/>
</dbReference>
<dbReference type="Pfam" id="PF08881">
    <property type="entry name" value="CVNH"/>
    <property type="match status" value="1"/>
</dbReference>
<dbReference type="SMART" id="SM01111">
    <property type="entry name" value="CVNH"/>
    <property type="match status" value="1"/>
</dbReference>
<dbReference type="SUPFAM" id="SSF51322">
    <property type="entry name" value="Cyanovirin-N"/>
    <property type="match status" value="1"/>
</dbReference>
<protein>
    <recommendedName>
        <fullName evidence="3">Cyanovirin-N homolog</fullName>
        <shortName evidence="3">CV-N homolog</shortName>
    </recommendedName>
</protein>
<name>CVNH_TUBBO</name>
<evidence type="ECO:0000269" key="1">
    <source>
    </source>
</evidence>
<evidence type="ECO:0000269" key="2">
    <source>
    </source>
</evidence>
<evidence type="ECO:0000303" key="3">
    <source>
    </source>
</evidence>
<evidence type="ECO:0000305" key="4"/>
<evidence type="ECO:0000312" key="5">
    <source>
        <dbReference type="EMBL" id="AAV85993.1"/>
    </source>
</evidence>
<evidence type="ECO:0007829" key="6">
    <source>
        <dbReference type="PDB" id="2JZK"/>
    </source>
</evidence>
<evidence type="ECO:0007829" key="7">
    <source>
        <dbReference type="PDB" id="3HNX"/>
    </source>
</evidence>
<organism>
    <name type="scientific">Tuber borchii</name>
    <name type="common">White truffle</name>
    <dbReference type="NCBI Taxonomy" id="42251"/>
    <lineage>
        <taxon>Eukaryota</taxon>
        <taxon>Fungi</taxon>
        <taxon>Dikarya</taxon>
        <taxon>Ascomycota</taxon>
        <taxon>Pezizomycotina</taxon>
        <taxon>Pezizomycetes</taxon>
        <taxon>Pezizales</taxon>
        <taxon>Tuberaceae</taxon>
        <taxon>Tuber</taxon>
    </lineage>
</organism>
<accession>Q5MK11</accession>
<feature type="chain" id="PRO_0000381733" description="Cyanovirin-N homolog">
    <location>
        <begin position="1"/>
        <end position="103"/>
    </location>
</feature>
<feature type="helix" evidence="7">
    <location>
        <begin position="3"/>
        <end position="6"/>
    </location>
</feature>
<feature type="strand" evidence="7">
    <location>
        <begin position="7"/>
        <end position="13"/>
    </location>
</feature>
<feature type="turn" evidence="7">
    <location>
        <begin position="14"/>
        <end position="17"/>
    </location>
</feature>
<feature type="strand" evidence="7">
    <location>
        <begin position="18"/>
        <end position="24"/>
    </location>
</feature>
<feature type="strand" evidence="7">
    <location>
        <begin position="30"/>
        <end position="36"/>
    </location>
</feature>
<feature type="helix" evidence="7">
    <location>
        <begin position="37"/>
        <end position="39"/>
    </location>
</feature>
<feature type="strand" evidence="6">
    <location>
        <begin position="49"/>
        <end position="52"/>
    </location>
</feature>
<feature type="helix" evidence="6">
    <location>
        <begin position="55"/>
        <end position="58"/>
    </location>
</feature>
<feature type="strand" evidence="6">
    <location>
        <begin position="59"/>
        <end position="66"/>
    </location>
</feature>
<feature type="strand" evidence="6">
    <location>
        <begin position="69"/>
        <end position="76"/>
    </location>
</feature>
<feature type="turn" evidence="6">
    <location>
        <begin position="78"/>
        <end position="80"/>
    </location>
</feature>
<feature type="strand" evidence="6">
    <location>
        <begin position="86"/>
        <end position="89"/>
    </location>
</feature>
<feature type="strand" evidence="7">
    <location>
        <begin position="93"/>
        <end position="96"/>
    </location>
</feature>
<feature type="strand" evidence="7">
    <location>
        <begin position="99"/>
        <end position="101"/>
    </location>
</feature>
<proteinExistence type="evidence at protein level"/>
<comment type="function">
    <text evidence="2">Mannose-binding lectin.</text>
</comment>
<comment type="induction">
    <text evidence="1">Down-regulated by nitrogen starvation.</text>
</comment>
<comment type="similarity">
    <text evidence="4">Belongs to the cyanovirin-N family.</text>
</comment>
<keyword id="KW-0002">3D-structure</keyword>
<keyword id="KW-0430">Lectin</keyword>
<reference evidence="4 5" key="1">
    <citation type="journal article" date="2006" name="Fungal Genet. Biol.">
        <title>Gene expression profiling of the nitrogen starvation stress response in the mycorrhizal ascomycete Tuber borchii.</title>
        <authorList>
            <person name="Montanini B."/>
            <person name="Gabella S."/>
            <person name="Abba S."/>
            <person name="Peter M."/>
            <person name="Kohler A."/>
            <person name="Bonfante P."/>
            <person name="Chalot M."/>
            <person name="Martin F."/>
            <person name="Ottonello S."/>
        </authorList>
    </citation>
    <scope>NUCLEOTIDE SEQUENCE [MRNA]</scope>
    <scope>INDUCTION</scope>
</reference>
<reference evidence="4" key="2">
    <citation type="journal article" date="2008" name="Structure">
        <title>The evolutionarily conserved family of cyanovirin-N homologs: structures and carbohydrate specificity.</title>
        <authorList>
            <person name="Koharudin L.M.I."/>
            <person name="Viscomi A.R."/>
            <person name="Jee J.-G."/>
            <person name="Ottonello S."/>
            <person name="Gronenborn A.M."/>
        </authorList>
    </citation>
    <scope>STRUCTURE BY NMR</scope>
    <scope>FUNCTION</scope>
</reference>